<protein>
    <recommendedName>
        <fullName>Lysine-specific demethylase phf2</fullName>
        <ecNumber>1.14.11.-</ecNumber>
    </recommendedName>
    <alternativeName>
        <fullName>PHD finger protein 2</fullName>
    </alternativeName>
</protein>
<proteinExistence type="evidence at transcript level"/>
<accession>Q6P949</accession>
<accession>E7EZ72</accession>
<evidence type="ECO:0000250" key="1"/>
<evidence type="ECO:0000250" key="2">
    <source>
        <dbReference type="UniProtKB" id="O75151"/>
    </source>
</evidence>
<evidence type="ECO:0000255" key="3">
    <source>
        <dbReference type="PROSITE-ProRule" id="PRU00146"/>
    </source>
</evidence>
<evidence type="ECO:0000255" key="4">
    <source>
        <dbReference type="PROSITE-ProRule" id="PRU00538"/>
    </source>
</evidence>
<evidence type="ECO:0000256" key="5">
    <source>
        <dbReference type="SAM" id="MobiDB-lite"/>
    </source>
</evidence>
<evidence type="ECO:0000305" key="6"/>
<gene>
    <name type="primary">phf2</name>
</gene>
<keyword id="KW-0010">Activator</keyword>
<keyword id="KW-0025">Alternative splicing</keyword>
<keyword id="KW-0137">Centromere</keyword>
<keyword id="KW-0156">Chromatin regulator</keyword>
<keyword id="KW-0158">Chromosome</keyword>
<keyword id="KW-0223">Dioxygenase</keyword>
<keyword id="KW-0408">Iron</keyword>
<keyword id="KW-0995">Kinetochore</keyword>
<keyword id="KW-0479">Metal-binding</keyword>
<keyword id="KW-0539">Nucleus</keyword>
<keyword id="KW-0560">Oxidoreductase</keyword>
<keyword id="KW-0597">Phosphoprotein</keyword>
<keyword id="KW-1185">Reference proteome</keyword>
<keyword id="KW-0804">Transcription</keyword>
<keyword id="KW-0805">Transcription regulation</keyword>
<keyword id="KW-0862">Zinc</keyword>
<keyword id="KW-0863">Zinc-finger</keyword>
<sequence length="1063" mass="118582">MATVPVYCICRLPYDVTQFMIECDACKDWFHGSCVGVDEDEAPDIDIYHCPNCEKTHGKSTLKKKKSWNKHDTGQSGDVRPVQNGSQVFIKELRSRTFPSSEDVVVKLSGSQLTLEYLEENGFNEPILIQKKDGLGMAMPAPTFYVSDVENYVGPDVLVDVVDVTKQTDSKMKLKEFVDYYYSTNRKKVLNVINLEFSDARMANIVESPQIVRKLSWVENYWPDDALLGKPKVSKYCLICVKDSYTDFHIECGGASVWYHVLKGEKIFFLIKPTSANLSLYERWRSSSNHSEMFFADQVDKCYKCTLKQGQTLFIPSGWINAILTPVDCLAFSGHFVHSLSVEMQMRAYEVEKRLKVASLTPFSNFETACWYVGKYYLEQFKGLHKANKQPPPYLVHGAKIVNGAFRSWTKKQALLEHEDELPENMKPAQLIKDLAKEIRIAEVKQVVSDSQNATKAIKSEPSNSKPPAEEPPSALSEPEEPMSPAHVSSPSGDKPARKKVPKPPKMPKAPKPPKEPKIKEGGKKKAKKVKEGVIPEKKPSSLAALESHAKDILNKMDQPKKLIKTGMSIMEKETNKPNDVKKFEMIREHNKNKTESKWKYKNSKPDSLLKMEEEHKFDKSLLSHKDNKFAFSLSNKKLLGSKMLKTQTNSSVFGSIQNIKEEKPKPVRDEYEYVSDEGELKIEEFPIRRKKNAVKREFSFLSNIKEPIQPSKKPKLPPSDMKSPDTSDEESLHIDTEAKTDVKGRNSKVSKKKGGSSAGILDLLQASKQVGGIDYSNNSQPPASPSTQEAIQGMLSMANLQSSDSCLQPFWSNSQAKNNSHSSAASKKPSGAAGAGGNSKRPAKRLPKKTQKSSSVDSSDMFDDDQDHLEACFKDSDYVYPSLESEEDNPIFKSRSKKRKNTDDTPYSPTARVGPTVPRQERPAREGARVASIETGLAAAAAKLSHQEEQKIKKKKKSAKKKPIVAEESHKLSHDSSSPEPTPDSESNMADHEYSTGTGKSAGGSQPMAPGVFLSHRRPSSSSSSQNASSVLPAKRLKKGMATAKQRLGKILKIHRNGKLLL</sequence>
<feature type="chain" id="PRO_0000399818" description="Lysine-specific demethylase phf2">
    <location>
        <begin position="1"/>
        <end position="1063"/>
    </location>
</feature>
<feature type="domain" description="JmjC" evidence="4">
    <location>
        <begin position="197"/>
        <end position="353"/>
    </location>
</feature>
<feature type="zinc finger region" description="PHD-type" evidence="3">
    <location>
        <begin position="5"/>
        <end position="56"/>
    </location>
</feature>
<feature type="region of interest" description="Disordered" evidence="5">
    <location>
        <begin position="448"/>
        <end position="546"/>
    </location>
</feature>
<feature type="region of interest" description="Disordered" evidence="5">
    <location>
        <begin position="704"/>
        <end position="761"/>
    </location>
</feature>
<feature type="region of interest" description="Disordered" evidence="5">
    <location>
        <begin position="773"/>
        <end position="864"/>
    </location>
</feature>
<feature type="region of interest" description="Disordered" evidence="5">
    <location>
        <begin position="879"/>
        <end position="1045"/>
    </location>
</feature>
<feature type="compositionally biased region" description="Low complexity" evidence="5">
    <location>
        <begin position="460"/>
        <end position="477"/>
    </location>
</feature>
<feature type="compositionally biased region" description="Basic and acidic residues" evidence="5">
    <location>
        <begin position="513"/>
        <end position="540"/>
    </location>
</feature>
<feature type="compositionally biased region" description="Basic and acidic residues" evidence="5">
    <location>
        <begin position="723"/>
        <end position="745"/>
    </location>
</feature>
<feature type="compositionally biased region" description="Basic residues" evidence="5">
    <location>
        <begin position="746"/>
        <end position="755"/>
    </location>
</feature>
<feature type="compositionally biased region" description="Polar residues" evidence="5">
    <location>
        <begin position="776"/>
        <end position="791"/>
    </location>
</feature>
<feature type="compositionally biased region" description="Low complexity" evidence="5">
    <location>
        <begin position="813"/>
        <end position="833"/>
    </location>
</feature>
<feature type="compositionally biased region" description="Basic residues" evidence="5">
    <location>
        <begin position="842"/>
        <end position="852"/>
    </location>
</feature>
<feature type="compositionally biased region" description="Basic and acidic residues" evidence="5">
    <location>
        <begin position="920"/>
        <end position="929"/>
    </location>
</feature>
<feature type="compositionally biased region" description="Basic residues" evidence="5">
    <location>
        <begin position="953"/>
        <end position="964"/>
    </location>
</feature>
<feature type="compositionally biased region" description="Basic and acidic residues" evidence="5">
    <location>
        <begin position="965"/>
        <end position="975"/>
    </location>
</feature>
<feature type="compositionally biased region" description="Low complexity" evidence="5">
    <location>
        <begin position="976"/>
        <end position="988"/>
    </location>
</feature>
<feature type="compositionally biased region" description="Low complexity" evidence="5">
    <location>
        <begin position="1021"/>
        <end position="1031"/>
    </location>
</feature>
<feature type="binding site" evidence="1">
    <location>
        <position position="246"/>
    </location>
    <ligand>
        <name>2-oxoglutarate</name>
        <dbReference type="ChEBI" id="CHEBI:16810"/>
    </ligand>
</feature>
<feature type="binding site" evidence="4">
    <location>
        <position position="249"/>
    </location>
    <ligand>
        <name>Fe cation</name>
        <dbReference type="ChEBI" id="CHEBI:24875"/>
        <note>catalytic</note>
    </ligand>
</feature>
<feature type="binding site" evidence="4">
    <location>
        <position position="251"/>
    </location>
    <ligand>
        <name>Fe cation</name>
        <dbReference type="ChEBI" id="CHEBI:24875"/>
        <note>catalytic</note>
    </ligand>
</feature>
<feature type="binding site" evidence="1">
    <location>
        <position position="259"/>
    </location>
    <ligand>
        <name>2-oxoglutarate</name>
        <dbReference type="ChEBI" id="CHEBI:16810"/>
    </ligand>
</feature>
<feature type="binding site" evidence="1">
    <location>
        <position position="266"/>
    </location>
    <ligand>
        <name>2-oxoglutarate</name>
        <dbReference type="ChEBI" id="CHEBI:16810"/>
    </ligand>
</feature>
<feature type="binding site" evidence="4">
    <location>
        <position position="321"/>
    </location>
    <ligand>
        <name>Fe cation</name>
        <dbReference type="ChEBI" id="CHEBI:24875"/>
        <note>catalytic</note>
    </ligand>
</feature>
<feature type="modified residue" description="Phosphoserine; by PKA" evidence="1">
    <location>
        <position position="1021"/>
    </location>
</feature>
<feature type="splice variant" id="VSP_041562" description="In isoform 2." evidence="6">
    <location>
        <begin position="444"/>
        <end position="452"/>
    </location>
</feature>
<feature type="sequence conflict" description="In Ref. 2; AAH60927." evidence="6" ref="2">
    <original>G</original>
    <variation>R</variation>
    <location>
        <position position="832"/>
    </location>
</feature>
<reference key="1">
    <citation type="journal article" date="2013" name="Nature">
        <title>The zebrafish reference genome sequence and its relationship to the human genome.</title>
        <authorList>
            <person name="Howe K."/>
            <person name="Clark M.D."/>
            <person name="Torroja C.F."/>
            <person name="Torrance J."/>
            <person name="Berthelot C."/>
            <person name="Muffato M."/>
            <person name="Collins J.E."/>
            <person name="Humphray S."/>
            <person name="McLaren K."/>
            <person name="Matthews L."/>
            <person name="McLaren S."/>
            <person name="Sealy I."/>
            <person name="Caccamo M."/>
            <person name="Churcher C."/>
            <person name="Scott C."/>
            <person name="Barrett J.C."/>
            <person name="Koch R."/>
            <person name="Rauch G.J."/>
            <person name="White S."/>
            <person name="Chow W."/>
            <person name="Kilian B."/>
            <person name="Quintais L.T."/>
            <person name="Guerra-Assuncao J.A."/>
            <person name="Zhou Y."/>
            <person name="Gu Y."/>
            <person name="Yen J."/>
            <person name="Vogel J.H."/>
            <person name="Eyre T."/>
            <person name="Redmond S."/>
            <person name="Banerjee R."/>
            <person name="Chi J."/>
            <person name="Fu B."/>
            <person name="Langley E."/>
            <person name="Maguire S.F."/>
            <person name="Laird G.K."/>
            <person name="Lloyd D."/>
            <person name="Kenyon E."/>
            <person name="Donaldson S."/>
            <person name="Sehra H."/>
            <person name="Almeida-King J."/>
            <person name="Loveland J."/>
            <person name="Trevanion S."/>
            <person name="Jones M."/>
            <person name="Quail M."/>
            <person name="Willey D."/>
            <person name="Hunt A."/>
            <person name="Burton J."/>
            <person name="Sims S."/>
            <person name="McLay K."/>
            <person name="Plumb B."/>
            <person name="Davis J."/>
            <person name="Clee C."/>
            <person name="Oliver K."/>
            <person name="Clark R."/>
            <person name="Riddle C."/>
            <person name="Elliot D."/>
            <person name="Threadgold G."/>
            <person name="Harden G."/>
            <person name="Ware D."/>
            <person name="Begum S."/>
            <person name="Mortimore B."/>
            <person name="Kerry G."/>
            <person name="Heath P."/>
            <person name="Phillimore B."/>
            <person name="Tracey A."/>
            <person name="Corby N."/>
            <person name="Dunn M."/>
            <person name="Johnson C."/>
            <person name="Wood J."/>
            <person name="Clark S."/>
            <person name="Pelan S."/>
            <person name="Griffiths G."/>
            <person name="Smith M."/>
            <person name="Glithero R."/>
            <person name="Howden P."/>
            <person name="Barker N."/>
            <person name="Lloyd C."/>
            <person name="Stevens C."/>
            <person name="Harley J."/>
            <person name="Holt K."/>
            <person name="Panagiotidis G."/>
            <person name="Lovell J."/>
            <person name="Beasley H."/>
            <person name="Henderson C."/>
            <person name="Gordon D."/>
            <person name="Auger K."/>
            <person name="Wright D."/>
            <person name="Collins J."/>
            <person name="Raisen C."/>
            <person name="Dyer L."/>
            <person name="Leung K."/>
            <person name="Robertson L."/>
            <person name="Ambridge K."/>
            <person name="Leongamornlert D."/>
            <person name="McGuire S."/>
            <person name="Gilderthorp R."/>
            <person name="Griffiths C."/>
            <person name="Manthravadi D."/>
            <person name="Nichol S."/>
            <person name="Barker G."/>
            <person name="Whitehead S."/>
            <person name="Kay M."/>
            <person name="Brown J."/>
            <person name="Murnane C."/>
            <person name="Gray E."/>
            <person name="Humphries M."/>
            <person name="Sycamore N."/>
            <person name="Barker D."/>
            <person name="Saunders D."/>
            <person name="Wallis J."/>
            <person name="Babbage A."/>
            <person name="Hammond S."/>
            <person name="Mashreghi-Mohammadi M."/>
            <person name="Barr L."/>
            <person name="Martin S."/>
            <person name="Wray P."/>
            <person name="Ellington A."/>
            <person name="Matthews N."/>
            <person name="Ellwood M."/>
            <person name="Woodmansey R."/>
            <person name="Clark G."/>
            <person name="Cooper J."/>
            <person name="Tromans A."/>
            <person name="Grafham D."/>
            <person name="Skuce C."/>
            <person name="Pandian R."/>
            <person name="Andrews R."/>
            <person name="Harrison E."/>
            <person name="Kimberley A."/>
            <person name="Garnett J."/>
            <person name="Fosker N."/>
            <person name="Hall R."/>
            <person name="Garner P."/>
            <person name="Kelly D."/>
            <person name="Bird C."/>
            <person name="Palmer S."/>
            <person name="Gehring I."/>
            <person name="Berger A."/>
            <person name="Dooley C.M."/>
            <person name="Ersan-Urun Z."/>
            <person name="Eser C."/>
            <person name="Geiger H."/>
            <person name="Geisler M."/>
            <person name="Karotki L."/>
            <person name="Kirn A."/>
            <person name="Konantz J."/>
            <person name="Konantz M."/>
            <person name="Oberlander M."/>
            <person name="Rudolph-Geiger S."/>
            <person name="Teucke M."/>
            <person name="Lanz C."/>
            <person name="Raddatz G."/>
            <person name="Osoegawa K."/>
            <person name="Zhu B."/>
            <person name="Rapp A."/>
            <person name="Widaa S."/>
            <person name="Langford C."/>
            <person name="Yang F."/>
            <person name="Schuster S.C."/>
            <person name="Carter N.P."/>
            <person name="Harrow J."/>
            <person name="Ning Z."/>
            <person name="Herrero J."/>
            <person name="Searle S.M."/>
            <person name="Enright A."/>
            <person name="Geisler R."/>
            <person name="Plasterk R.H."/>
            <person name="Lee C."/>
            <person name="Westerfield M."/>
            <person name="de Jong P.J."/>
            <person name="Zon L.I."/>
            <person name="Postlethwait J.H."/>
            <person name="Nusslein-Volhard C."/>
            <person name="Hubbard T.J."/>
            <person name="Roest Crollius H."/>
            <person name="Rogers J."/>
            <person name="Stemple D.L."/>
        </authorList>
    </citation>
    <scope>NUCLEOTIDE SEQUENCE [LARGE SCALE GENOMIC DNA]</scope>
    <source>
        <strain>Tuebingen</strain>
    </source>
</reference>
<reference key="2">
    <citation type="submission" date="2003-11" db="EMBL/GenBank/DDBJ databases">
        <authorList>
            <consortium name="NIH - Zebrafish Gene Collection (ZGC) project"/>
        </authorList>
    </citation>
    <scope>NUCLEOTIDE SEQUENCE [LARGE SCALE MRNA] OF 1-899 (ISOFORM 1)</scope>
    <source>
        <tissue>Eye</tissue>
    </source>
</reference>
<comment type="function">
    <text evidence="2">Lysine demethylase that demethylates both histones and non-histone proteins. Mediates demethylation of dimethylated 'Lys-9' of histone H3 (H3K9me2). Recruited to trimethylated 'Lys-4' of histone H3 (H3K4me3) at rDNA promoters and promotes expression of rDNA (By similarity).</text>
</comment>
<comment type="subcellular location">
    <subcellularLocation>
        <location evidence="2">Nucleus</location>
        <location evidence="2">Nucleolus</location>
    </subcellularLocation>
    <subcellularLocation>
        <location evidence="2">Chromosome</location>
        <location evidence="2">Centromere</location>
        <location evidence="2">Kinetochore</location>
    </subcellularLocation>
</comment>
<comment type="alternative products">
    <event type="alternative splicing"/>
    <isoform>
        <id>Q6P949-1</id>
        <name>1</name>
        <sequence type="displayed"/>
    </isoform>
    <isoform>
        <id>Q6P949-2</id>
        <name>2</name>
        <sequence type="described" ref="VSP_041562"/>
    </isoform>
</comment>
<comment type="similarity">
    <text evidence="6">Belongs to the JHDM1 histone demethylase family. JHDM1D subfamily.</text>
</comment>
<comment type="caution">
    <text evidence="6">In contrast to the related histone demethylases jhdm1d and phf8, the conserved active His in position 321 is replaced by an Asn. However, the presence of an Asn residue neither affects binding to the catalytic iron nor abolishes demethylase activity.</text>
</comment>
<comment type="sequence caution" evidence="6">
    <conflict type="miscellaneous discrepancy">
        <sequence resource="EMBL-CDS" id="AAH60927"/>
    </conflict>
    <text>Contaminating sequence. Potential poly-A sequence.</text>
</comment>
<name>PHF2_DANRE</name>
<dbReference type="EC" id="1.14.11.-"/>
<dbReference type="EMBL" id="BX601648">
    <property type="status" value="NOT_ANNOTATED_CDS"/>
    <property type="molecule type" value="Genomic_DNA"/>
</dbReference>
<dbReference type="EMBL" id="BC060927">
    <property type="protein sequence ID" value="AAH60927.1"/>
    <property type="status" value="ALT_SEQ"/>
    <property type="molecule type" value="mRNA"/>
</dbReference>
<dbReference type="RefSeq" id="NP_001189347.1">
    <molecule id="Q6P949-2"/>
    <property type="nucleotide sequence ID" value="NM_001202418.1"/>
</dbReference>
<dbReference type="SMR" id="Q6P949"/>
<dbReference type="FunCoup" id="Q6P949">
    <property type="interactions" value="624"/>
</dbReference>
<dbReference type="STRING" id="7955.ENSDARP00000045941"/>
<dbReference type="PaxDb" id="7955-ENSDARP00000111663"/>
<dbReference type="GeneID" id="503778"/>
<dbReference type="KEGG" id="dre:503778"/>
<dbReference type="AGR" id="ZFIN:ZDB-GENE-050302-10"/>
<dbReference type="CTD" id="5253"/>
<dbReference type="ZFIN" id="ZDB-GENE-050302-10">
    <property type="gene designation" value="phf2"/>
</dbReference>
<dbReference type="eggNOG" id="KOG1633">
    <property type="taxonomic scope" value="Eukaryota"/>
</dbReference>
<dbReference type="InParanoid" id="Q6P949"/>
<dbReference type="OrthoDB" id="5876800at2759"/>
<dbReference type="PRO" id="PR:Q6P949"/>
<dbReference type="Proteomes" id="UP000000437">
    <property type="component" value="Chromosome 11"/>
</dbReference>
<dbReference type="Bgee" id="ENSDARG00000018691">
    <property type="expression patterns" value="Expressed in camera-type eye and 24 other cell types or tissues"/>
</dbReference>
<dbReference type="ExpressionAtlas" id="Q6P949">
    <property type="expression patterns" value="baseline and differential"/>
</dbReference>
<dbReference type="GO" id="GO:0000776">
    <property type="term" value="C:kinetochore"/>
    <property type="evidence" value="ECO:0000250"/>
    <property type="project" value="UniProtKB"/>
</dbReference>
<dbReference type="GO" id="GO:0005730">
    <property type="term" value="C:nucleolus"/>
    <property type="evidence" value="ECO:0000250"/>
    <property type="project" value="UniProtKB"/>
</dbReference>
<dbReference type="GO" id="GO:0032452">
    <property type="term" value="F:histone demethylase activity"/>
    <property type="evidence" value="ECO:0000318"/>
    <property type="project" value="GO_Central"/>
</dbReference>
<dbReference type="GO" id="GO:0140002">
    <property type="term" value="F:histone H3K4me3 reader activity"/>
    <property type="evidence" value="ECO:0000250"/>
    <property type="project" value="UniProtKB"/>
</dbReference>
<dbReference type="GO" id="GO:0032454">
    <property type="term" value="F:histone H3K9 demethylase activity"/>
    <property type="evidence" value="ECO:0000250"/>
    <property type="project" value="UniProtKB"/>
</dbReference>
<dbReference type="GO" id="GO:0035575">
    <property type="term" value="F:histone H4K20 demethylase activity"/>
    <property type="evidence" value="ECO:0000250"/>
    <property type="project" value="UniProtKB"/>
</dbReference>
<dbReference type="GO" id="GO:0005506">
    <property type="term" value="F:iron ion binding"/>
    <property type="evidence" value="ECO:0000250"/>
    <property type="project" value="UniProtKB"/>
</dbReference>
<dbReference type="GO" id="GO:0003713">
    <property type="term" value="F:transcription coactivator activity"/>
    <property type="evidence" value="ECO:0000250"/>
    <property type="project" value="UniProtKB"/>
</dbReference>
<dbReference type="GO" id="GO:0003712">
    <property type="term" value="F:transcription coregulator activity"/>
    <property type="evidence" value="ECO:0000318"/>
    <property type="project" value="GO_Central"/>
</dbReference>
<dbReference type="GO" id="GO:0008270">
    <property type="term" value="F:zinc ion binding"/>
    <property type="evidence" value="ECO:0000250"/>
    <property type="project" value="UniProtKB"/>
</dbReference>
<dbReference type="GO" id="GO:0006338">
    <property type="term" value="P:chromatin remodeling"/>
    <property type="evidence" value="ECO:0000318"/>
    <property type="project" value="GO_Central"/>
</dbReference>
<dbReference type="GO" id="GO:0061188">
    <property type="term" value="P:negative regulation of rDNA heterochromatin formation"/>
    <property type="evidence" value="ECO:0000250"/>
    <property type="project" value="UniProtKB"/>
</dbReference>
<dbReference type="GO" id="GO:0006482">
    <property type="term" value="P:protein demethylation"/>
    <property type="evidence" value="ECO:0000250"/>
    <property type="project" value="UniProtKB"/>
</dbReference>
<dbReference type="GO" id="GO:0006357">
    <property type="term" value="P:regulation of transcription by RNA polymerase II"/>
    <property type="evidence" value="ECO:0000318"/>
    <property type="project" value="GO_Central"/>
</dbReference>
<dbReference type="GO" id="GO:0045815">
    <property type="term" value="P:transcription initiation-coupled chromatin remodeling"/>
    <property type="evidence" value="ECO:0000250"/>
    <property type="project" value="UniProtKB"/>
</dbReference>
<dbReference type="CDD" id="cd15641">
    <property type="entry name" value="PHD_PHF2"/>
    <property type="match status" value="1"/>
</dbReference>
<dbReference type="FunFam" id="3.30.40.10:FF:000193">
    <property type="entry name" value="lysine-specific demethylase PHF2 isoform X1"/>
    <property type="match status" value="1"/>
</dbReference>
<dbReference type="FunFam" id="2.60.120.650:FF:000011">
    <property type="entry name" value="PHD finger protein 2"/>
    <property type="match status" value="1"/>
</dbReference>
<dbReference type="Gene3D" id="1.20.58.1360">
    <property type="match status" value="1"/>
</dbReference>
<dbReference type="Gene3D" id="2.60.120.650">
    <property type="entry name" value="Cupin"/>
    <property type="match status" value="1"/>
</dbReference>
<dbReference type="Gene3D" id="3.30.40.10">
    <property type="entry name" value="Zinc/RING finger domain, C3HC4 (zinc finger)"/>
    <property type="match status" value="1"/>
</dbReference>
<dbReference type="InterPro" id="IPR041070">
    <property type="entry name" value="JHD"/>
</dbReference>
<dbReference type="InterPro" id="IPR050690">
    <property type="entry name" value="JHDM1_Histone_Demethylase"/>
</dbReference>
<dbReference type="InterPro" id="IPR003347">
    <property type="entry name" value="JmjC_dom"/>
</dbReference>
<dbReference type="InterPro" id="IPR019786">
    <property type="entry name" value="Zinc_finger_PHD-type_CS"/>
</dbReference>
<dbReference type="InterPro" id="IPR011011">
    <property type="entry name" value="Znf_FYVE_PHD"/>
</dbReference>
<dbReference type="InterPro" id="IPR001965">
    <property type="entry name" value="Znf_PHD"/>
</dbReference>
<dbReference type="InterPro" id="IPR019787">
    <property type="entry name" value="Znf_PHD-finger"/>
</dbReference>
<dbReference type="InterPro" id="IPR013083">
    <property type="entry name" value="Znf_RING/FYVE/PHD"/>
</dbReference>
<dbReference type="PANTHER" id="PTHR23123">
    <property type="entry name" value="PHD/F-BOX CONTAINING PROTEIN"/>
    <property type="match status" value="1"/>
</dbReference>
<dbReference type="Pfam" id="PF17811">
    <property type="entry name" value="JHD"/>
    <property type="match status" value="1"/>
</dbReference>
<dbReference type="Pfam" id="PF02373">
    <property type="entry name" value="JmjC"/>
    <property type="match status" value="1"/>
</dbReference>
<dbReference type="Pfam" id="PF00628">
    <property type="entry name" value="PHD"/>
    <property type="match status" value="1"/>
</dbReference>
<dbReference type="SMART" id="SM00558">
    <property type="entry name" value="JmjC"/>
    <property type="match status" value="1"/>
</dbReference>
<dbReference type="SMART" id="SM00249">
    <property type="entry name" value="PHD"/>
    <property type="match status" value="1"/>
</dbReference>
<dbReference type="SUPFAM" id="SSF51197">
    <property type="entry name" value="Clavaminate synthase-like"/>
    <property type="match status" value="1"/>
</dbReference>
<dbReference type="SUPFAM" id="SSF57903">
    <property type="entry name" value="FYVE/PHD zinc finger"/>
    <property type="match status" value="1"/>
</dbReference>
<dbReference type="PROSITE" id="PS51184">
    <property type="entry name" value="JMJC"/>
    <property type="match status" value="1"/>
</dbReference>
<dbReference type="PROSITE" id="PS01359">
    <property type="entry name" value="ZF_PHD_1"/>
    <property type="match status" value="1"/>
</dbReference>
<dbReference type="PROSITE" id="PS50016">
    <property type="entry name" value="ZF_PHD_2"/>
    <property type="match status" value="1"/>
</dbReference>
<organism>
    <name type="scientific">Danio rerio</name>
    <name type="common">Zebrafish</name>
    <name type="synonym">Brachydanio rerio</name>
    <dbReference type="NCBI Taxonomy" id="7955"/>
    <lineage>
        <taxon>Eukaryota</taxon>
        <taxon>Metazoa</taxon>
        <taxon>Chordata</taxon>
        <taxon>Craniata</taxon>
        <taxon>Vertebrata</taxon>
        <taxon>Euteleostomi</taxon>
        <taxon>Actinopterygii</taxon>
        <taxon>Neopterygii</taxon>
        <taxon>Teleostei</taxon>
        <taxon>Ostariophysi</taxon>
        <taxon>Cypriniformes</taxon>
        <taxon>Danionidae</taxon>
        <taxon>Danioninae</taxon>
        <taxon>Danio</taxon>
    </lineage>
</organism>